<gene>
    <name type="primary">mecA1</name>
    <name type="ordered locus">BC_1190</name>
</gene>
<feature type="chain" id="PRO_0000212262" description="Adapter protein MecA 1">
    <location>
        <begin position="1"/>
        <end position="227"/>
    </location>
</feature>
<organism>
    <name type="scientific">Bacillus cereus (strain ATCC 14579 / DSM 31 / CCUG 7414 / JCM 2152 / NBRC 15305 / NCIMB 9373 / NCTC 2599 / NRRL B-3711)</name>
    <dbReference type="NCBI Taxonomy" id="226900"/>
    <lineage>
        <taxon>Bacteria</taxon>
        <taxon>Bacillati</taxon>
        <taxon>Bacillota</taxon>
        <taxon>Bacilli</taxon>
        <taxon>Bacillales</taxon>
        <taxon>Bacillaceae</taxon>
        <taxon>Bacillus</taxon>
        <taxon>Bacillus cereus group</taxon>
    </lineage>
</organism>
<protein>
    <recommendedName>
        <fullName>Adapter protein MecA 1</fullName>
    </recommendedName>
</protein>
<reference key="1">
    <citation type="journal article" date="2003" name="Nature">
        <title>Genome sequence of Bacillus cereus and comparative analysis with Bacillus anthracis.</title>
        <authorList>
            <person name="Ivanova N."/>
            <person name="Sorokin A."/>
            <person name="Anderson I."/>
            <person name="Galleron N."/>
            <person name="Candelon B."/>
            <person name="Kapatral V."/>
            <person name="Bhattacharyya A."/>
            <person name="Reznik G."/>
            <person name="Mikhailova N."/>
            <person name="Lapidus A."/>
            <person name="Chu L."/>
            <person name="Mazur M."/>
            <person name="Goltsman E."/>
            <person name="Larsen N."/>
            <person name="D'Souza M."/>
            <person name="Walunas T."/>
            <person name="Grechkin Y."/>
            <person name="Pusch G."/>
            <person name="Haselkorn R."/>
            <person name="Fonstein M."/>
            <person name="Ehrlich S.D."/>
            <person name="Overbeek R."/>
            <person name="Kyrpides N.C."/>
        </authorList>
    </citation>
    <scope>NUCLEOTIDE SEQUENCE [LARGE SCALE GENOMIC DNA]</scope>
    <source>
        <strain>ATCC 14579 / DSM 31 / CCUG 7414 / JCM 2152 / NBRC 15305 / NCIMB 9373 / NCTC 2599 / NRRL B-3711</strain>
    </source>
</reference>
<sequence length="227" mass="27010">MDIERINDHTMKFFITYIDIEDRGFNREEIWYDRERSEELFWEMMDEARDHDDFFIDGPLWIQVQAVDKGIEVLVTKAELSKDGQKLELPIGVDKIIDIPLDEGIESLFQQELVEEVEEQTGTNFNEDGTFGFLIKFNDFEDVISLSHRLIFEDIKDELYSFEDRYYVYVEFDEVLHDEEEIDRILSIILEYGEESTLTIHRVSEYGKQIVKEHALETIRNNFPAKT</sequence>
<name>MECA1_BACCR</name>
<accession>Q81GK5</accession>
<keyword id="KW-0178">Competence</keyword>
<keyword id="KW-1185">Reference proteome</keyword>
<keyword id="KW-0749">Sporulation</keyword>
<dbReference type="EMBL" id="AE016877">
    <property type="protein sequence ID" value="AAP08176.1"/>
    <property type="molecule type" value="Genomic_DNA"/>
</dbReference>
<dbReference type="RefSeq" id="NP_830975.1">
    <property type="nucleotide sequence ID" value="NC_004722.1"/>
</dbReference>
<dbReference type="SMR" id="Q81GK5"/>
<dbReference type="STRING" id="226900.BC_1190"/>
<dbReference type="KEGG" id="bce:BC1190"/>
<dbReference type="PATRIC" id="fig|226900.8.peg.1157"/>
<dbReference type="HOGENOM" id="CLU_071496_2_1_9"/>
<dbReference type="OrthoDB" id="2360201at2"/>
<dbReference type="Proteomes" id="UP000001417">
    <property type="component" value="Chromosome"/>
</dbReference>
<dbReference type="GO" id="GO:0030674">
    <property type="term" value="F:protein-macromolecule adaptor activity"/>
    <property type="evidence" value="ECO:0007669"/>
    <property type="project" value="UniProtKB-UniRule"/>
</dbReference>
<dbReference type="GO" id="GO:0030420">
    <property type="term" value="P:establishment of competence for transformation"/>
    <property type="evidence" value="ECO:0007669"/>
    <property type="project" value="UniProtKB-KW"/>
</dbReference>
<dbReference type="GO" id="GO:0045808">
    <property type="term" value="P:negative regulation of establishment of competence for transformation"/>
    <property type="evidence" value="ECO:0007669"/>
    <property type="project" value="UniProtKB-UniRule"/>
</dbReference>
<dbReference type="GO" id="GO:0042174">
    <property type="term" value="P:negative regulation of sporulation resulting in formation of a cellular spore"/>
    <property type="evidence" value="ECO:0007669"/>
    <property type="project" value="UniProtKB-UniRule"/>
</dbReference>
<dbReference type="GO" id="GO:0030435">
    <property type="term" value="P:sporulation resulting in formation of a cellular spore"/>
    <property type="evidence" value="ECO:0007669"/>
    <property type="project" value="UniProtKB-KW"/>
</dbReference>
<dbReference type="FunFam" id="3.30.70.1950:FF:000002">
    <property type="entry name" value="Adapter protein MecA"/>
    <property type="match status" value="1"/>
</dbReference>
<dbReference type="Gene3D" id="3.30.70.1950">
    <property type="match status" value="1"/>
</dbReference>
<dbReference type="HAMAP" id="MF_01124">
    <property type="entry name" value="MecA"/>
    <property type="match status" value="1"/>
</dbReference>
<dbReference type="InterPro" id="IPR038471">
    <property type="entry name" value="MecA_C_sf"/>
</dbReference>
<dbReference type="InterPro" id="IPR008681">
    <property type="entry name" value="Neg-reg_MecA"/>
</dbReference>
<dbReference type="NCBIfam" id="NF002641">
    <property type="entry name" value="PRK02315.1-1"/>
    <property type="match status" value="1"/>
</dbReference>
<dbReference type="NCBIfam" id="NF002644">
    <property type="entry name" value="PRK02315.1-5"/>
    <property type="match status" value="1"/>
</dbReference>
<dbReference type="PANTHER" id="PTHR39161">
    <property type="entry name" value="ADAPTER PROTEIN MECA"/>
    <property type="match status" value="1"/>
</dbReference>
<dbReference type="PANTHER" id="PTHR39161:SF1">
    <property type="entry name" value="ADAPTER PROTEIN MECA 1"/>
    <property type="match status" value="1"/>
</dbReference>
<dbReference type="Pfam" id="PF05389">
    <property type="entry name" value="MecA"/>
    <property type="match status" value="1"/>
</dbReference>
<dbReference type="PIRSF" id="PIRSF029008">
    <property type="entry name" value="MecA"/>
    <property type="match status" value="1"/>
</dbReference>
<comment type="function">
    <text evidence="1">Enables the recognition and targeting of unfolded and aggregated proteins to the ClpC protease or to other proteins involved in proteolysis. Acts negatively in the development of competence by binding ComK and recruiting it to the ClpCP protease. When overexpressed, inhibits sporulation. Also involved in Spx degradation by ClpC (By similarity).</text>
</comment>
<comment type="subunit">
    <text evidence="1">Homodimer.</text>
</comment>
<comment type="domain">
    <text>The N-terminal domain has binding sites for ComK and probably for unfolded/aggregated proteins; the C-terminal domain interacts with ClpC.</text>
</comment>
<comment type="similarity">
    <text evidence="2">Belongs to the MecA family.</text>
</comment>
<proteinExistence type="inferred from homology"/>
<evidence type="ECO:0000250" key="1"/>
<evidence type="ECO:0000305" key="2"/>